<protein>
    <recommendedName>
        <fullName evidence="1">DNA-directed RNA polymerase subunit beta</fullName>
        <ecNumber evidence="1">2.7.7.6</ecNumber>
    </recommendedName>
    <alternativeName>
        <fullName evidence="1">PEP</fullName>
    </alternativeName>
    <alternativeName>
        <fullName evidence="1">Plastid-encoded RNA polymerase subunit beta</fullName>
        <shortName evidence="1">RNA polymerase subunit beta</shortName>
    </alternativeName>
</protein>
<comment type="function">
    <text evidence="1">DNA-dependent RNA polymerase catalyzes the transcription of DNA into RNA using the four ribonucleoside triphosphates as substrates.</text>
</comment>
<comment type="catalytic activity">
    <reaction evidence="1">
        <text>RNA(n) + a ribonucleoside 5'-triphosphate = RNA(n+1) + diphosphate</text>
        <dbReference type="Rhea" id="RHEA:21248"/>
        <dbReference type="Rhea" id="RHEA-COMP:14527"/>
        <dbReference type="Rhea" id="RHEA-COMP:17342"/>
        <dbReference type="ChEBI" id="CHEBI:33019"/>
        <dbReference type="ChEBI" id="CHEBI:61557"/>
        <dbReference type="ChEBI" id="CHEBI:140395"/>
        <dbReference type="EC" id="2.7.7.6"/>
    </reaction>
</comment>
<comment type="subunit">
    <text evidence="1">In plastids the minimal PEP RNA polymerase catalytic core is composed of four subunits: alpha, beta, beta', and beta''. When a (nuclear-encoded) sigma factor is associated with the core the holoenzyme is formed, which can initiate transcription.</text>
</comment>
<comment type="subcellular location">
    <subcellularLocation>
        <location>Plastid</location>
        <location>Chloroplast</location>
    </subcellularLocation>
</comment>
<comment type="similarity">
    <text evidence="1">Belongs to the RNA polymerase beta chain family.</text>
</comment>
<sequence>MEGGGMTTIPGFNQIQFEGFCRFIDQGLTEELSKFPKIEDIDQEIEFQLFVETYQLVEPLIKERDAVYDSLTYSSELYVSARLIWKTSRDMQEQTIFIGSIPLMNSQGTSIVNGIYRIVINQILQSPGIYYRSELDHNGISVYTGTIISDWGGRSELEIDRKARIWARVSRKQKISILVLSSAMGSNLREILENVCYPEIFLSFLSDKEKKKIGSKENAILEFYQQFACVDGDPIFSESLWKELQKKFFQQRCELGRIGRRNMNRRLNLDIPQNNTFLLPRDLLAAADHLIGLKFGMGTLDDMNHLQNKRIRSVADLLQDQFGLALVRLENAVRGTICGAIRHKLIPTPQNLVTSTPLTTTYESFFGLHPLSQVLDRTNPLTQIVHGRKFSSLGPGGLTGRTASFRIRDIHPSHYGRICPIDTSEGINVGLIGSLAIHARIGHWGSLESPFYEISERSTGVRMLYLSPGRDEYYMVAAGNSLALNQDIQEDQVVPARYRQEFLTIAWEQVHLRSIFPFQYFSIGASLIPFIEHNDANRALMSSNMQRQAVPLSRSEKCIVGTGVERQAALDSGALVIAEREGRVVYTDTDKILFSGDGETLSIPLVMYKRSNKNTCMHQKPQVQRGKCIKKGQILADGAATVEGELALGKNVLVAYMPWEGYNSEDAVLISERLVYEDIYTSFHIKKYEIQTHVTSQGPEKVTNEIPHLEAHFIRNLDKNGIVKQGSWVETGDVLVGKLTPQVVKESSYAPEDRLLRAILGIQVSTSKETCLKVPIGGRGRVIDVRWIQKKGGSSYNPEMIRVYILQKREIKVGDKVAGRHGNKGIISKILPRQDMPYLQDGRSVDLVFNPLGVPSRMNLGQIFECSLGLAGSLLDRHYRIAPFDERYEQEASRKVVFSELYEASKQTANPWAFEPEYPGKSRIFDGRTGNPFEQPVLIGKPYILKLIHQVDDKIHGRSSGHYALVTQQPLRGRAKQGGQRVGEMEVWALEGFGVAHILQEMLTYKSDHIRARQEVLGTTIVGGTIPNPKDAPESFRLLVRELRSLALELNHFLVSEKNFQIHRKEA</sequence>
<gene>
    <name evidence="1" type="primary">rpoB</name>
</gene>
<organism>
    <name type="scientific">Ipomoea purpurea</name>
    <name type="common">Common morning glory</name>
    <name type="synonym">Pharbitis purpurea</name>
    <dbReference type="NCBI Taxonomy" id="4121"/>
    <lineage>
        <taxon>Eukaryota</taxon>
        <taxon>Viridiplantae</taxon>
        <taxon>Streptophyta</taxon>
        <taxon>Embryophyta</taxon>
        <taxon>Tracheophyta</taxon>
        <taxon>Spermatophyta</taxon>
        <taxon>Magnoliopsida</taxon>
        <taxon>eudicotyledons</taxon>
        <taxon>Gunneridae</taxon>
        <taxon>Pentapetalae</taxon>
        <taxon>asterids</taxon>
        <taxon>lamiids</taxon>
        <taxon>Solanales</taxon>
        <taxon>Convolvulaceae</taxon>
        <taxon>Ipomoeeae</taxon>
        <taxon>Ipomoea</taxon>
    </lineage>
</organism>
<evidence type="ECO:0000255" key="1">
    <source>
        <dbReference type="HAMAP-Rule" id="MF_01321"/>
    </source>
</evidence>
<name>RPOB_IPOPU</name>
<feature type="chain" id="PRO_0000329200" description="DNA-directed RNA polymerase subunit beta">
    <location>
        <begin position="1"/>
        <end position="1067"/>
    </location>
</feature>
<accession>A7Y3B9</accession>
<reference key="1">
    <citation type="journal article" date="2007" name="BMC Plant Biol.">
        <title>Complete plastid genome sequences suggest strong selection for retention of photosynthetic genes in the parasitic plant genus Cuscuta.</title>
        <authorList>
            <person name="McNeal J.R."/>
            <person name="Kuehl J.V."/>
            <person name="Boore J.L."/>
            <person name="dePamphilis C.W."/>
        </authorList>
    </citation>
    <scope>NUCLEOTIDE SEQUENCE [LARGE SCALE GENOMIC DNA]</scope>
</reference>
<geneLocation type="chloroplast"/>
<keyword id="KW-0150">Chloroplast</keyword>
<keyword id="KW-0240">DNA-directed RNA polymerase</keyword>
<keyword id="KW-0548">Nucleotidyltransferase</keyword>
<keyword id="KW-0934">Plastid</keyword>
<keyword id="KW-0804">Transcription</keyword>
<keyword id="KW-0808">Transferase</keyword>
<dbReference type="EC" id="2.7.7.6" evidence="1"/>
<dbReference type="EMBL" id="EU118126">
    <property type="protein sequence ID" value="ABV02340.1"/>
    <property type="molecule type" value="Genomic_DNA"/>
</dbReference>
<dbReference type="RefSeq" id="YP_001468300.1">
    <property type="nucleotide sequence ID" value="NC_009808.1"/>
</dbReference>
<dbReference type="SMR" id="A7Y3B9"/>
<dbReference type="GeneID" id="5601337"/>
<dbReference type="GO" id="GO:0009507">
    <property type="term" value="C:chloroplast"/>
    <property type="evidence" value="ECO:0007669"/>
    <property type="project" value="UniProtKB-SubCell"/>
</dbReference>
<dbReference type="GO" id="GO:0000428">
    <property type="term" value="C:DNA-directed RNA polymerase complex"/>
    <property type="evidence" value="ECO:0007669"/>
    <property type="project" value="UniProtKB-KW"/>
</dbReference>
<dbReference type="GO" id="GO:0005739">
    <property type="term" value="C:mitochondrion"/>
    <property type="evidence" value="ECO:0007669"/>
    <property type="project" value="GOC"/>
</dbReference>
<dbReference type="GO" id="GO:0003677">
    <property type="term" value="F:DNA binding"/>
    <property type="evidence" value="ECO:0007669"/>
    <property type="project" value="UniProtKB-UniRule"/>
</dbReference>
<dbReference type="GO" id="GO:0003899">
    <property type="term" value="F:DNA-directed RNA polymerase activity"/>
    <property type="evidence" value="ECO:0007669"/>
    <property type="project" value="UniProtKB-UniRule"/>
</dbReference>
<dbReference type="GO" id="GO:0032549">
    <property type="term" value="F:ribonucleoside binding"/>
    <property type="evidence" value="ECO:0007669"/>
    <property type="project" value="InterPro"/>
</dbReference>
<dbReference type="GO" id="GO:0006351">
    <property type="term" value="P:DNA-templated transcription"/>
    <property type="evidence" value="ECO:0007669"/>
    <property type="project" value="UniProtKB-UniRule"/>
</dbReference>
<dbReference type="CDD" id="cd00653">
    <property type="entry name" value="RNA_pol_B_RPB2"/>
    <property type="match status" value="1"/>
</dbReference>
<dbReference type="FunFam" id="3.90.1110.10:FF:000009">
    <property type="entry name" value="DNA-directed RNA polymerase subunit beta"/>
    <property type="match status" value="1"/>
</dbReference>
<dbReference type="Gene3D" id="2.40.50.100">
    <property type="match status" value="1"/>
</dbReference>
<dbReference type="Gene3D" id="2.40.50.150">
    <property type="match status" value="1"/>
</dbReference>
<dbReference type="Gene3D" id="3.90.1100.10">
    <property type="match status" value="1"/>
</dbReference>
<dbReference type="Gene3D" id="2.30.150.10">
    <property type="entry name" value="DNA-directed RNA polymerase, beta subunit, external 1 domain"/>
    <property type="match status" value="1"/>
</dbReference>
<dbReference type="Gene3D" id="2.40.270.10">
    <property type="entry name" value="DNA-directed RNA polymerase, subunit 2, domain 6"/>
    <property type="match status" value="1"/>
</dbReference>
<dbReference type="Gene3D" id="3.90.1800.10">
    <property type="entry name" value="RNA polymerase alpha subunit dimerisation domain"/>
    <property type="match status" value="1"/>
</dbReference>
<dbReference type="Gene3D" id="3.90.1110.10">
    <property type="entry name" value="RNA polymerase Rpb2, domain 2"/>
    <property type="match status" value="1"/>
</dbReference>
<dbReference type="HAMAP" id="MF_01321">
    <property type="entry name" value="RNApol_bact_RpoB"/>
    <property type="match status" value="1"/>
</dbReference>
<dbReference type="InterPro" id="IPR042107">
    <property type="entry name" value="DNA-dir_RNA_pol_bsu_ext_1_sf"/>
</dbReference>
<dbReference type="InterPro" id="IPR015712">
    <property type="entry name" value="DNA-dir_RNA_pol_su2"/>
</dbReference>
<dbReference type="InterPro" id="IPR007120">
    <property type="entry name" value="DNA-dir_RNAP_su2_dom"/>
</dbReference>
<dbReference type="InterPro" id="IPR037033">
    <property type="entry name" value="DNA-dir_RNAP_su2_hyb_sf"/>
</dbReference>
<dbReference type="InterPro" id="IPR010243">
    <property type="entry name" value="RNA_pol_bsu_bac"/>
</dbReference>
<dbReference type="InterPro" id="IPR007121">
    <property type="entry name" value="RNA_pol_bsu_CS"/>
</dbReference>
<dbReference type="InterPro" id="IPR007642">
    <property type="entry name" value="RNA_pol_Rpb2_2"/>
</dbReference>
<dbReference type="InterPro" id="IPR037034">
    <property type="entry name" value="RNA_pol_Rpb2_2_sf"/>
</dbReference>
<dbReference type="InterPro" id="IPR007645">
    <property type="entry name" value="RNA_pol_Rpb2_3"/>
</dbReference>
<dbReference type="InterPro" id="IPR007641">
    <property type="entry name" value="RNA_pol_Rpb2_7"/>
</dbReference>
<dbReference type="InterPro" id="IPR014724">
    <property type="entry name" value="RNA_pol_RPB2_OB-fold"/>
</dbReference>
<dbReference type="NCBIfam" id="NF001616">
    <property type="entry name" value="PRK00405.1"/>
    <property type="match status" value="1"/>
</dbReference>
<dbReference type="PANTHER" id="PTHR20856">
    <property type="entry name" value="DNA-DIRECTED RNA POLYMERASE I SUBUNIT 2"/>
    <property type="match status" value="1"/>
</dbReference>
<dbReference type="Pfam" id="PF04561">
    <property type="entry name" value="RNA_pol_Rpb2_2"/>
    <property type="match status" value="1"/>
</dbReference>
<dbReference type="Pfam" id="PF04565">
    <property type="entry name" value="RNA_pol_Rpb2_3"/>
    <property type="match status" value="1"/>
</dbReference>
<dbReference type="Pfam" id="PF00562">
    <property type="entry name" value="RNA_pol_Rpb2_6"/>
    <property type="match status" value="1"/>
</dbReference>
<dbReference type="Pfam" id="PF04560">
    <property type="entry name" value="RNA_pol_Rpb2_7"/>
    <property type="match status" value="1"/>
</dbReference>
<dbReference type="SUPFAM" id="SSF64484">
    <property type="entry name" value="beta and beta-prime subunits of DNA dependent RNA-polymerase"/>
    <property type="match status" value="1"/>
</dbReference>
<dbReference type="PROSITE" id="PS01166">
    <property type="entry name" value="RNA_POL_BETA"/>
    <property type="match status" value="1"/>
</dbReference>
<proteinExistence type="inferred from homology"/>